<accession>Q5UQA3</accession>
<protein>
    <recommendedName>
        <fullName>Uncharacterized protein L533</fullName>
    </recommendedName>
</protein>
<sequence>MELLDKAVTDFQLFYQKILDLYESDFSPADKWTEIATHIHDNQQIPIGIYKLLRQNDTVNQIDIDYKSDLEQLNSKISLESDFIVKSSLIIASMHFIIYDMITREGNYSSIMYGSEEMNIPSVHNMIYYVYISTKNQQNIYFHAYILLFGLESIFNKKFYVGMDFEFTNKKIQLSQLNFEHNVSTKSIIMIVSPNELEDIMMNNFIKIIICNTNIKKILHGSDSLDIPYMYTHRLDGDPDKIIKFTRTLIDTRFLCEYYKLNSDIVSDNRCSIYDEDPSRSAVYFFKVISDEQQNKLAELLESMPAPHDIQWNIHKMPISQARYAAYDVLYLKVFYYRIIHVATEEDSSDIGKKNIIELYKHLLNEITRFVYLEQNGITLLMAKCKEEVDVVNNYFIRNSEGITKMIDIFNQVSLGLETSDPKVNVDSFSKVNHFKRPITTIIKRIVYGFISYRCRIYKDKSTIWTDKLDNQFIFDFLAKMKFNYLNKMFKELSKTLESRIVAICSVR</sequence>
<dbReference type="EMBL" id="AY653733">
    <property type="protein sequence ID" value="AAV50797.1"/>
    <property type="molecule type" value="Genomic_DNA"/>
</dbReference>
<dbReference type="Proteomes" id="UP000001134">
    <property type="component" value="Genome"/>
</dbReference>
<dbReference type="GO" id="GO:0044423">
    <property type="term" value="C:virion component"/>
    <property type="evidence" value="ECO:0007669"/>
    <property type="project" value="UniProtKB-KW"/>
</dbReference>
<dbReference type="GO" id="GO:0003676">
    <property type="term" value="F:nucleic acid binding"/>
    <property type="evidence" value="ECO:0007669"/>
    <property type="project" value="InterPro"/>
</dbReference>
<dbReference type="Gene3D" id="3.30.420.10">
    <property type="entry name" value="Ribonuclease H-like superfamily/Ribonuclease H"/>
    <property type="match status" value="1"/>
</dbReference>
<dbReference type="InterPro" id="IPR012337">
    <property type="entry name" value="RNaseH-like_sf"/>
</dbReference>
<dbReference type="InterPro" id="IPR036397">
    <property type="entry name" value="RNaseH_sf"/>
</dbReference>
<dbReference type="SUPFAM" id="SSF53098">
    <property type="entry name" value="Ribonuclease H-like"/>
    <property type="match status" value="1"/>
</dbReference>
<proteinExistence type="evidence at protein level"/>
<comment type="subcellular location">
    <subcellularLocation>
        <location evidence="1">Virion</location>
    </subcellularLocation>
</comment>
<reference key="1">
    <citation type="journal article" date="2004" name="Science">
        <title>The 1.2-megabase genome sequence of Mimivirus.</title>
        <authorList>
            <person name="Raoult D."/>
            <person name="Audic S."/>
            <person name="Robert C."/>
            <person name="Abergel C."/>
            <person name="Renesto P."/>
            <person name="Ogata H."/>
            <person name="La Scola B."/>
            <person name="Susan M."/>
            <person name="Claverie J.-M."/>
        </authorList>
    </citation>
    <scope>NUCLEOTIDE SEQUENCE [LARGE SCALE GENOMIC DNA]</scope>
    <source>
        <strain>Rowbotham-Bradford</strain>
    </source>
</reference>
<reference key="2">
    <citation type="journal article" date="2006" name="J. Virol.">
        <title>Mimivirus giant particles incorporate a large fraction of anonymous and unique gene products.</title>
        <authorList>
            <person name="Renesto P."/>
            <person name="Abergel C."/>
            <person name="Decloquement P."/>
            <person name="Moinier D."/>
            <person name="Azza S."/>
            <person name="Ogata H."/>
            <person name="Fourquet P."/>
            <person name="Gorvel J.-P."/>
            <person name="Claverie J.-M."/>
            <person name="Raoult D."/>
        </authorList>
    </citation>
    <scope>IDENTIFICATION BY MASS SPECTROMETRY [LARGE SCALE ANALYSIS]</scope>
    <scope>SUBCELLULAR LOCATION</scope>
</reference>
<organism>
    <name type="scientific">Acanthamoeba polyphaga mimivirus</name>
    <name type="common">APMV</name>
    <dbReference type="NCBI Taxonomy" id="212035"/>
    <lineage>
        <taxon>Viruses</taxon>
        <taxon>Varidnaviria</taxon>
        <taxon>Bamfordvirae</taxon>
        <taxon>Nucleocytoviricota</taxon>
        <taxon>Megaviricetes</taxon>
        <taxon>Imitervirales</taxon>
        <taxon>Mimiviridae</taxon>
        <taxon>Megamimivirinae</taxon>
        <taxon>Mimivirus</taxon>
        <taxon>Mimivirus bradfordmassiliense</taxon>
    </lineage>
</organism>
<name>YL533_MIMIV</name>
<keyword id="KW-1185">Reference proteome</keyword>
<keyword id="KW-0946">Virion</keyword>
<feature type="chain" id="PRO_0000251120" description="Uncharacterized protein L533">
    <location>
        <begin position="1"/>
        <end position="508"/>
    </location>
</feature>
<evidence type="ECO:0000269" key="1">
    <source>
    </source>
</evidence>
<organismHost>
    <name type="scientific">Acanthamoeba polyphaga</name>
    <name type="common">Amoeba</name>
    <dbReference type="NCBI Taxonomy" id="5757"/>
</organismHost>
<gene>
    <name type="ordered locus">MIMI_L533</name>
</gene>